<accession>Q8MJ80</accession>
<feature type="signal peptide" evidence="3">
    <location>
        <begin position="1"/>
        <end position="23"/>
    </location>
</feature>
<feature type="propeptide" id="PRO_0000013383" evidence="3">
    <location>
        <begin position="24"/>
        <end position="53"/>
    </location>
</feature>
<feature type="peptide" id="PRO_0000013384" description="Hepcidin">
    <location>
        <begin position="58"/>
        <end position="82"/>
    </location>
</feature>
<feature type="disulfide bond" evidence="1">
    <location>
        <begin position="64"/>
        <end position="80"/>
    </location>
</feature>
<feature type="disulfide bond" evidence="1">
    <location>
        <begin position="67"/>
        <end position="70"/>
    </location>
</feature>
<feature type="disulfide bond" evidence="1">
    <location>
        <begin position="68"/>
        <end position="76"/>
    </location>
</feature>
<feature type="disulfide bond" evidence="1">
    <location>
        <begin position="71"/>
        <end position="79"/>
    </location>
</feature>
<organism>
    <name type="scientific">Sus scrofa</name>
    <name type="common">Pig</name>
    <dbReference type="NCBI Taxonomy" id="9823"/>
    <lineage>
        <taxon>Eukaryota</taxon>
        <taxon>Metazoa</taxon>
        <taxon>Chordata</taxon>
        <taxon>Craniata</taxon>
        <taxon>Vertebrata</taxon>
        <taxon>Euteleostomi</taxon>
        <taxon>Mammalia</taxon>
        <taxon>Eutheria</taxon>
        <taxon>Laurasiatheria</taxon>
        <taxon>Artiodactyla</taxon>
        <taxon>Suina</taxon>
        <taxon>Suidae</taxon>
        <taxon>Sus</taxon>
    </lineage>
</organism>
<evidence type="ECO:0000250" key="1"/>
<evidence type="ECO:0000250" key="2">
    <source>
        <dbReference type="UniProtKB" id="P81172"/>
    </source>
</evidence>
<evidence type="ECO:0000255" key="3"/>
<evidence type="ECO:0000305" key="4"/>
<protein>
    <recommendedName>
        <fullName>Hepcidin</fullName>
    </recommendedName>
</protein>
<gene>
    <name type="primary">HAMP</name>
</gene>
<comment type="function">
    <text evidence="2">Liver-produced hormone that constitutes the main circulating regulator of iron absorption and distribution across tissues. Acts by promoting endocytosis and degradation of ferroportin/SLC40A1, leading to the retention of iron in iron-exporting cells and decreased flow of iron into plasma. Controls the major flows of iron into plasma: absorption of dietary iron in the intestine, recycling of iron by macrophages, which phagocytose old erythrocytes and other cells, and mobilization of stored iron from hepatocytes.</text>
</comment>
<comment type="function">
    <text evidence="2">Has strong antimicrobial activity against E.coli ML35P N.cinerea and weaker against S.epidermidis, S.aureus and group b streptococcus bacteria. Active against the fungus C.albicans. No activity against P.aeruginosa.</text>
</comment>
<comment type="subunit">
    <text evidence="2">Interacts with SLC40A1; this interaction promotes SLC40A1 rapid ubiquitination.</text>
</comment>
<comment type="subcellular location">
    <subcellularLocation>
        <location>Secreted</location>
    </subcellularLocation>
</comment>
<comment type="similarity">
    <text evidence="4">Belongs to the hepcidin family.</text>
</comment>
<reference key="1">
    <citation type="submission" date="2002-05" db="EMBL/GenBank/DDBJ databases">
        <title>Cloning and characterization of porcine liver-expressed antimicrobial peptides, Hepcidin (pHAMP) and LEAP2.</title>
        <authorList>
            <person name="Sang Y."/>
            <person name="Ross C.R."/>
            <person name="Blecha F."/>
        </authorList>
    </citation>
    <scope>NUCLEOTIDE SEQUENCE [MRNA]</scope>
</reference>
<dbReference type="EMBL" id="AF516143">
    <property type="protein sequence ID" value="AAM77745.1"/>
    <property type="molecule type" value="mRNA"/>
</dbReference>
<dbReference type="RefSeq" id="NP_999282.1">
    <property type="nucleotide sequence ID" value="NM_214117.1"/>
</dbReference>
<dbReference type="SMR" id="Q8MJ80"/>
<dbReference type="FunCoup" id="Q8MJ80">
    <property type="interactions" value="237"/>
</dbReference>
<dbReference type="STRING" id="9823.ENSSSCP00000042081"/>
<dbReference type="PaxDb" id="9823-ENSSSCP00000003108"/>
<dbReference type="Ensembl" id="ENSSSCT00000040953.3">
    <property type="protein sequence ID" value="ENSSSCP00000042081.1"/>
    <property type="gene ID" value="ENSSSCG00000035436.3"/>
</dbReference>
<dbReference type="Ensembl" id="ENSSSCT00040086541.1">
    <property type="protein sequence ID" value="ENSSSCP00040037957.1"/>
    <property type="gene ID" value="ENSSSCG00040063437.1"/>
</dbReference>
<dbReference type="Ensembl" id="ENSSSCT00040096614.1">
    <property type="protein sequence ID" value="ENSSSCP00040042929.1"/>
    <property type="gene ID" value="ENSSSCG00040070425.1"/>
</dbReference>
<dbReference type="Ensembl" id="ENSSSCT00070020080.1">
    <property type="protein sequence ID" value="ENSSSCP00070016695.1"/>
    <property type="gene ID" value="ENSSSCG00070010319.1"/>
</dbReference>
<dbReference type="Ensembl" id="ENSSSCT00105048833">
    <property type="protein sequence ID" value="ENSSSCP00105034315"/>
    <property type="gene ID" value="ENSSSCG00105025725"/>
</dbReference>
<dbReference type="Ensembl" id="ENSSSCT00110067402">
    <property type="protein sequence ID" value="ENSSSCP00110047614"/>
    <property type="gene ID" value="ENSSSCG00110035398"/>
</dbReference>
<dbReference type="Ensembl" id="ENSSSCT00115013339">
    <property type="protein sequence ID" value="ENSSSCP00115012600"/>
    <property type="gene ID" value="ENSSSCG00115007637"/>
</dbReference>
<dbReference type="Ensembl" id="ENSSSCT00130043858">
    <property type="protein sequence ID" value="ENSSSCP00130030846"/>
    <property type="gene ID" value="ENSSSCG00130022705"/>
</dbReference>
<dbReference type="GeneID" id="397207"/>
<dbReference type="KEGG" id="ssc:397207"/>
<dbReference type="CTD" id="57817"/>
<dbReference type="VGNC" id="VGNC:88776">
    <property type="gene designation" value="HAMP"/>
</dbReference>
<dbReference type="eggNOG" id="ENOG502T0FU">
    <property type="taxonomic scope" value="Eukaryota"/>
</dbReference>
<dbReference type="GeneTree" id="ENSGT00390000003154"/>
<dbReference type="HOGENOM" id="CLU_2557737_0_0_1"/>
<dbReference type="InParanoid" id="Q8MJ80"/>
<dbReference type="OMA" id="PICLFCC"/>
<dbReference type="OrthoDB" id="9428792at2759"/>
<dbReference type="TreeFam" id="TF330932"/>
<dbReference type="Proteomes" id="UP000008227">
    <property type="component" value="Chromosome 6"/>
</dbReference>
<dbReference type="Proteomes" id="UP000314985">
    <property type="component" value="Chromosome 6"/>
</dbReference>
<dbReference type="Proteomes" id="UP000694570">
    <property type="component" value="Unplaced"/>
</dbReference>
<dbReference type="Proteomes" id="UP000694571">
    <property type="component" value="Unplaced"/>
</dbReference>
<dbReference type="Proteomes" id="UP000694720">
    <property type="component" value="Unplaced"/>
</dbReference>
<dbReference type="Proteomes" id="UP000694722">
    <property type="component" value="Unplaced"/>
</dbReference>
<dbReference type="Proteomes" id="UP000694723">
    <property type="component" value="Unplaced"/>
</dbReference>
<dbReference type="Proteomes" id="UP000694724">
    <property type="component" value="Unplaced"/>
</dbReference>
<dbReference type="Proteomes" id="UP000694725">
    <property type="component" value="Unplaced"/>
</dbReference>
<dbReference type="Proteomes" id="UP000694726">
    <property type="component" value="Unplaced"/>
</dbReference>
<dbReference type="Proteomes" id="UP000694727">
    <property type="component" value="Unplaced"/>
</dbReference>
<dbReference type="Proteomes" id="UP000694728">
    <property type="component" value="Unplaced"/>
</dbReference>
<dbReference type="Bgee" id="ENSSSCG00000035436">
    <property type="expression patterns" value="Expressed in liver and 11 other cell types or tissues"/>
</dbReference>
<dbReference type="GO" id="GO:0005615">
    <property type="term" value="C:extracellular space"/>
    <property type="evidence" value="ECO:0000318"/>
    <property type="project" value="GO_Central"/>
</dbReference>
<dbReference type="GO" id="GO:0005179">
    <property type="term" value="F:hormone activity"/>
    <property type="evidence" value="ECO:0007669"/>
    <property type="project" value="UniProtKB-KW"/>
</dbReference>
<dbReference type="GO" id="GO:0141108">
    <property type="term" value="F:transporter regulator activity"/>
    <property type="evidence" value="ECO:0007669"/>
    <property type="project" value="Ensembl"/>
</dbReference>
<dbReference type="GO" id="GO:0042742">
    <property type="term" value="P:defense response to bacterium"/>
    <property type="evidence" value="ECO:0000318"/>
    <property type="project" value="GO_Central"/>
</dbReference>
<dbReference type="GO" id="GO:0006879">
    <property type="term" value="P:intracellular iron ion homeostasis"/>
    <property type="evidence" value="ECO:0000318"/>
    <property type="project" value="GO_Central"/>
</dbReference>
<dbReference type="GO" id="GO:0060586">
    <property type="term" value="P:multicellular organismal-level iron ion homeostasis"/>
    <property type="evidence" value="ECO:0007669"/>
    <property type="project" value="Ensembl"/>
</dbReference>
<dbReference type="GO" id="GO:1904479">
    <property type="term" value="P:negative regulation of intestinal absorption"/>
    <property type="evidence" value="ECO:0007669"/>
    <property type="project" value="Ensembl"/>
</dbReference>
<dbReference type="GO" id="GO:1904039">
    <property type="term" value="P:negative regulation of iron export across plasma membrane"/>
    <property type="evidence" value="ECO:0007669"/>
    <property type="project" value="Ensembl"/>
</dbReference>
<dbReference type="GO" id="GO:0034760">
    <property type="term" value="P:negative regulation of iron ion transmembrane transport"/>
    <property type="evidence" value="ECO:0000318"/>
    <property type="project" value="GO_Central"/>
</dbReference>
<dbReference type="GO" id="GO:0032436">
    <property type="term" value="P:positive regulation of proteasomal ubiquitin-dependent protein catabolic process"/>
    <property type="evidence" value="ECO:0007669"/>
    <property type="project" value="Ensembl"/>
</dbReference>
<dbReference type="GO" id="GO:0010039">
    <property type="term" value="P:response to iron ion"/>
    <property type="evidence" value="ECO:0007669"/>
    <property type="project" value="Ensembl"/>
</dbReference>
<dbReference type="InterPro" id="IPR010500">
    <property type="entry name" value="Hepcidin"/>
</dbReference>
<dbReference type="PANTHER" id="PTHR16877">
    <property type="entry name" value="HEPCIDIN"/>
    <property type="match status" value="1"/>
</dbReference>
<dbReference type="PANTHER" id="PTHR16877:SF0">
    <property type="entry name" value="HEPCIDIN"/>
    <property type="match status" value="1"/>
</dbReference>
<dbReference type="Pfam" id="PF06446">
    <property type="entry name" value="Hepcidin"/>
    <property type="match status" value="1"/>
</dbReference>
<sequence length="82" mass="8771">MALSVQIRAACLLLLLLVSLTAGSVLPSQTRQLTDLRTQDTAGATAGLTPVAQRLRRDTHFPICIFCCGCCRKAICGMCCKT</sequence>
<keyword id="KW-0044">Antibiotic</keyword>
<keyword id="KW-0929">Antimicrobial</keyword>
<keyword id="KW-0165">Cleavage on pair of basic residues</keyword>
<keyword id="KW-1015">Disulfide bond</keyword>
<keyword id="KW-0372">Hormone</keyword>
<keyword id="KW-1185">Reference proteome</keyword>
<keyword id="KW-0964">Secreted</keyword>
<keyword id="KW-0732">Signal</keyword>
<proteinExistence type="inferred from homology"/>
<name>HEPC_PIG</name>